<name>RL21_WIGBR</name>
<sequence length="103" mass="11748">MYAIFKINGVQYKAKSGSVVCLNKISGDIGSTIEIKKIMALFNDEKIIFGQPFIKNSRIIATIKKHINGKKISIVKFSRRKHFKKITGYRQKLTNIKIIDICC</sequence>
<dbReference type="EMBL" id="BA000021">
    <property type="protein sequence ID" value="BAC24623.1"/>
    <property type="molecule type" value="Genomic_DNA"/>
</dbReference>
<dbReference type="SMR" id="Q8D277"/>
<dbReference type="STRING" id="36870.gene:10368981"/>
<dbReference type="KEGG" id="wbr:rplU"/>
<dbReference type="eggNOG" id="COG0261">
    <property type="taxonomic scope" value="Bacteria"/>
</dbReference>
<dbReference type="HOGENOM" id="CLU_061463_3_3_6"/>
<dbReference type="OrthoDB" id="9813334at2"/>
<dbReference type="Proteomes" id="UP000000562">
    <property type="component" value="Chromosome"/>
</dbReference>
<dbReference type="GO" id="GO:0005737">
    <property type="term" value="C:cytoplasm"/>
    <property type="evidence" value="ECO:0007669"/>
    <property type="project" value="UniProtKB-ARBA"/>
</dbReference>
<dbReference type="GO" id="GO:1990904">
    <property type="term" value="C:ribonucleoprotein complex"/>
    <property type="evidence" value="ECO:0007669"/>
    <property type="project" value="UniProtKB-KW"/>
</dbReference>
<dbReference type="GO" id="GO:0005840">
    <property type="term" value="C:ribosome"/>
    <property type="evidence" value="ECO:0007669"/>
    <property type="project" value="UniProtKB-KW"/>
</dbReference>
<dbReference type="GO" id="GO:0019843">
    <property type="term" value="F:rRNA binding"/>
    <property type="evidence" value="ECO:0007669"/>
    <property type="project" value="UniProtKB-UniRule"/>
</dbReference>
<dbReference type="GO" id="GO:0003735">
    <property type="term" value="F:structural constituent of ribosome"/>
    <property type="evidence" value="ECO:0007669"/>
    <property type="project" value="InterPro"/>
</dbReference>
<dbReference type="GO" id="GO:0006412">
    <property type="term" value="P:translation"/>
    <property type="evidence" value="ECO:0007669"/>
    <property type="project" value="UniProtKB-UniRule"/>
</dbReference>
<dbReference type="HAMAP" id="MF_01363">
    <property type="entry name" value="Ribosomal_bL21"/>
    <property type="match status" value="1"/>
</dbReference>
<dbReference type="InterPro" id="IPR028909">
    <property type="entry name" value="bL21-like"/>
</dbReference>
<dbReference type="InterPro" id="IPR036164">
    <property type="entry name" value="bL21-like_sf"/>
</dbReference>
<dbReference type="InterPro" id="IPR001787">
    <property type="entry name" value="Ribosomal_bL21"/>
</dbReference>
<dbReference type="InterPro" id="IPR018258">
    <property type="entry name" value="Ribosomal_bL21_CS"/>
</dbReference>
<dbReference type="NCBIfam" id="TIGR00061">
    <property type="entry name" value="L21"/>
    <property type="match status" value="1"/>
</dbReference>
<dbReference type="PANTHER" id="PTHR21349">
    <property type="entry name" value="50S RIBOSOMAL PROTEIN L21"/>
    <property type="match status" value="1"/>
</dbReference>
<dbReference type="PANTHER" id="PTHR21349:SF0">
    <property type="entry name" value="LARGE RIBOSOMAL SUBUNIT PROTEIN BL21M"/>
    <property type="match status" value="1"/>
</dbReference>
<dbReference type="Pfam" id="PF00829">
    <property type="entry name" value="Ribosomal_L21p"/>
    <property type="match status" value="1"/>
</dbReference>
<dbReference type="SUPFAM" id="SSF141091">
    <property type="entry name" value="L21p-like"/>
    <property type="match status" value="1"/>
</dbReference>
<dbReference type="PROSITE" id="PS01169">
    <property type="entry name" value="RIBOSOMAL_L21"/>
    <property type="match status" value="1"/>
</dbReference>
<comment type="function">
    <text evidence="1">This protein binds to 23S rRNA in the presence of protein L20.</text>
</comment>
<comment type="subunit">
    <text evidence="1">Part of the 50S ribosomal subunit. Contacts protein L20.</text>
</comment>
<comment type="similarity">
    <text evidence="1">Belongs to the bacterial ribosomal protein bL21 family.</text>
</comment>
<feature type="chain" id="PRO_0000270745" description="Large ribosomal subunit protein bL21">
    <location>
        <begin position="1"/>
        <end position="103"/>
    </location>
</feature>
<keyword id="KW-1185">Reference proteome</keyword>
<keyword id="KW-0687">Ribonucleoprotein</keyword>
<keyword id="KW-0689">Ribosomal protein</keyword>
<keyword id="KW-0694">RNA-binding</keyword>
<keyword id="KW-0699">rRNA-binding</keyword>
<reference key="1">
    <citation type="journal article" date="2002" name="Nat. Genet.">
        <title>Genome sequence of the endocellular obligate symbiont of tsetse flies, Wigglesworthia glossinidia.</title>
        <authorList>
            <person name="Akman L."/>
            <person name="Yamashita A."/>
            <person name="Watanabe H."/>
            <person name="Oshima K."/>
            <person name="Shiba T."/>
            <person name="Hattori M."/>
            <person name="Aksoy S."/>
        </authorList>
    </citation>
    <scope>NUCLEOTIDE SEQUENCE [LARGE SCALE GENOMIC DNA]</scope>
</reference>
<proteinExistence type="inferred from homology"/>
<accession>Q8D277</accession>
<organism>
    <name type="scientific">Wigglesworthia glossinidia brevipalpis</name>
    <dbReference type="NCBI Taxonomy" id="36870"/>
    <lineage>
        <taxon>Bacteria</taxon>
        <taxon>Pseudomonadati</taxon>
        <taxon>Pseudomonadota</taxon>
        <taxon>Gammaproteobacteria</taxon>
        <taxon>Enterobacterales</taxon>
        <taxon>Erwiniaceae</taxon>
        <taxon>Wigglesworthia</taxon>
    </lineage>
</organism>
<evidence type="ECO:0000255" key="1">
    <source>
        <dbReference type="HAMAP-Rule" id="MF_01363"/>
    </source>
</evidence>
<evidence type="ECO:0000305" key="2"/>
<gene>
    <name evidence="1" type="primary">rplU</name>
    <name type="ordered locus">WIGBR4770</name>
</gene>
<protein>
    <recommendedName>
        <fullName evidence="1">Large ribosomal subunit protein bL21</fullName>
    </recommendedName>
    <alternativeName>
        <fullName evidence="2">50S ribosomal protein L21</fullName>
    </alternativeName>
</protein>